<accession>A1TZS9</accession>
<name>SUCC_MARN8</name>
<protein>
    <recommendedName>
        <fullName evidence="1">Succinate--CoA ligase [ADP-forming] subunit beta</fullName>
        <ecNumber evidence="1">6.2.1.5</ecNumber>
    </recommendedName>
    <alternativeName>
        <fullName evidence="1">Succinyl-CoA synthetase subunit beta</fullName>
        <shortName evidence="1">SCS-beta</shortName>
    </alternativeName>
</protein>
<feature type="chain" id="PRO_1000082120" description="Succinate--CoA ligase [ADP-forming] subunit beta">
    <location>
        <begin position="1"/>
        <end position="388"/>
    </location>
</feature>
<feature type="domain" description="ATP-grasp" evidence="1">
    <location>
        <begin position="9"/>
        <end position="244"/>
    </location>
</feature>
<feature type="binding site" evidence="1">
    <location>
        <position position="46"/>
    </location>
    <ligand>
        <name>ATP</name>
        <dbReference type="ChEBI" id="CHEBI:30616"/>
    </ligand>
</feature>
<feature type="binding site" evidence="1">
    <location>
        <begin position="53"/>
        <end position="55"/>
    </location>
    <ligand>
        <name>ATP</name>
        <dbReference type="ChEBI" id="CHEBI:30616"/>
    </ligand>
</feature>
<feature type="binding site" evidence="1">
    <location>
        <position position="99"/>
    </location>
    <ligand>
        <name>ATP</name>
        <dbReference type="ChEBI" id="CHEBI:30616"/>
    </ligand>
</feature>
<feature type="binding site" evidence="1">
    <location>
        <position position="102"/>
    </location>
    <ligand>
        <name>ATP</name>
        <dbReference type="ChEBI" id="CHEBI:30616"/>
    </ligand>
</feature>
<feature type="binding site" evidence="1">
    <location>
        <position position="107"/>
    </location>
    <ligand>
        <name>ATP</name>
        <dbReference type="ChEBI" id="CHEBI:30616"/>
    </ligand>
</feature>
<feature type="binding site" evidence="1">
    <location>
        <position position="199"/>
    </location>
    <ligand>
        <name>Mg(2+)</name>
        <dbReference type="ChEBI" id="CHEBI:18420"/>
    </ligand>
</feature>
<feature type="binding site" evidence="1">
    <location>
        <position position="213"/>
    </location>
    <ligand>
        <name>Mg(2+)</name>
        <dbReference type="ChEBI" id="CHEBI:18420"/>
    </ligand>
</feature>
<feature type="binding site" evidence="1">
    <location>
        <position position="264"/>
    </location>
    <ligand>
        <name>substrate</name>
        <note>ligand shared with subunit alpha</note>
    </ligand>
</feature>
<feature type="binding site" evidence="1">
    <location>
        <begin position="321"/>
        <end position="323"/>
    </location>
    <ligand>
        <name>substrate</name>
        <note>ligand shared with subunit alpha</note>
    </ligand>
</feature>
<gene>
    <name evidence="1" type="primary">sucC</name>
    <name type="ordered locus">Maqu_1157</name>
</gene>
<comment type="function">
    <text evidence="1">Succinyl-CoA synthetase functions in the citric acid cycle (TCA), coupling the hydrolysis of succinyl-CoA to the synthesis of either ATP or GTP and thus represents the only step of substrate-level phosphorylation in the TCA. The beta subunit provides nucleotide specificity of the enzyme and binds the substrate succinate, while the binding sites for coenzyme A and phosphate are found in the alpha subunit.</text>
</comment>
<comment type="catalytic activity">
    <reaction evidence="1">
        <text>succinate + ATP + CoA = succinyl-CoA + ADP + phosphate</text>
        <dbReference type="Rhea" id="RHEA:17661"/>
        <dbReference type="ChEBI" id="CHEBI:30031"/>
        <dbReference type="ChEBI" id="CHEBI:30616"/>
        <dbReference type="ChEBI" id="CHEBI:43474"/>
        <dbReference type="ChEBI" id="CHEBI:57287"/>
        <dbReference type="ChEBI" id="CHEBI:57292"/>
        <dbReference type="ChEBI" id="CHEBI:456216"/>
        <dbReference type="EC" id="6.2.1.5"/>
    </reaction>
    <physiologicalReaction direction="right-to-left" evidence="1">
        <dbReference type="Rhea" id="RHEA:17663"/>
    </physiologicalReaction>
</comment>
<comment type="catalytic activity">
    <reaction evidence="1">
        <text>GTP + succinate + CoA = succinyl-CoA + GDP + phosphate</text>
        <dbReference type="Rhea" id="RHEA:22120"/>
        <dbReference type="ChEBI" id="CHEBI:30031"/>
        <dbReference type="ChEBI" id="CHEBI:37565"/>
        <dbReference type="ChEBI" id="CHEBI:43474"/>
        <dbReference type="ChEBI" id="CHEBI:57287"/>
        <dbReference type="ChEBI" id="CHEBI:57292"/>
        <dbReference type="ChEBI" id="CHEBI:58189"/>
    </reaction>
    <physiologicalReaction direction="right-to-left" evidence="1">
        <dbReference type="Rhea" id="RHEA:22122"/>
    </physiologicalReaction>
</comment>
<comment type="cofactor">
    <cofactor evidence="1">
        <name>Mg(2+)</name>
        <dbReference type="ChEBI" id="CHEBI:18420"/>
    </cofactor>
    <text evidence="1">Binds 1 Mg(2+) ion per subunit.</text>
</comment>
<comment type="pathway">
    <text evidence="1">Carbohydrate metabolism; tricarboxylic acid cycle; succinate from succinyl-CoA (ligase route): step 1/1.</text>
</comment>
<comment type="subunit">
    <text evidence="1">Heterotetramer of two alpha and two beta subunits.</text>
</comment>
<comment type="similarity">
    <text evidence="1">Belongs to the succinate/malate CoA ligase beta subunit family.</text>
</comment>
<proteinExistence type="inferred from homology"/>
<sequence>MNLHEYQGKQLFAEYGLPVSKGIACDTPKEAVAAADEIGGDGWVVKAQVHAGGRGKAGGVKLVKSKEEIREFAEKWLGKNLVTYQTDENGQPVSKILVESLTDIDQELYLGAVVDRGSRRIVFMASTEGGVEIEKVAEETPEKILKAEIDPLVGAQPYQGRELAFKLGLEGKQIGQFTKIFLGLAKLFEECDLALVEINPLVITPAGDLHCLDAKVGVDGNALYRQKKIHEMHDPSQEDSREAEAAKWELNYVALEGNIGCMVNGAGLAMGTMDIIKLSGGQPANFLDVGGGATKERVSEAFKIILSDDAVQAVLVNIFGGIVRCDMIAEGIIGAVKEVGVKVPVVVRLEGNNAELGTKVLAESGLNIIAATSLADAAEQVVKAAGGK</sequence>
<dbReference type="EC" id="6.2.1.5" evidence="1"/>
<dbReference type="EMBL" id="CP000514">
    <property type="protein sequence ID" value="ABM18248.1"/>
    <property type="molecule type" value="Genomic_DNA"/>
</dbReference>
<dbReference type="RefSeq" id="WP_011784665.1">
    <property type="nucleotide sequence ID" value="NC_008740.1"/>
</dbReference>
<dbReference type="SMR" id="A1TZS9"/>
<dbReference type="STRING" id="351348.Maqu_1157"/>
<dbReference type="GeneID" id="31821527"/>
<dbReference type="KEGG" id="maq:Maqu_1157"/>
<dbReference type="eggNOG" id="COG0045">
    <property type="taxonomic scope" value="Bacteria"/>
</dbReference>
<dbReference type="HOGENOM" id="CLU_037430_4_0_6"/>
<dbReference type="OrthoDB" id="9802602at2"/>
<dbReference type="UniPathway" id="UPA00223">
    <property type="reaction ID" value="UER00999"/>
</dbReference>
<dbReference type="Proteomes" id="UP000000998">
    <property type="component" value="Chromosome"/>
</dbReference>
<dbReference type="GO" id="GO:0005829">
    <property type="term" value="C:cytosol"/>
    <property type="evidence" value="ECO:0007669"/>
    <property type="project" value="TreeGrafter"/>
</dbReference>
<dbReference type="GO" id="GO:0042709">
    <property type="term" value="C:succinate-CoA ligase complex"/>
    <property type="evidence" value="ECO:0007669"/>
    <property type="project" value="TreeGrafter"/>
</dbReference>
<dbReference type="GO" id="GO:0005524">
    <property type="term" value="F:ATP binding"/>
    <property type="evidence" value="ECO:0007669"/>
    <property type="project" value="UniProtKB-UniRule"/>
</dbReference>
<dbReference type="GO" id="GO:0000287">
    <property type="term" value="F:magnesium ion binding"/>
    <property type="evidence" value="ECO:0007669"/>
    <property type="project" value="UniProtKB-UniRule"/>
</dbReference>
<dbReference type="GO" id="GO:0004775">
    <property type="term" value="F:succinate-CoA ligase (ADP-forming) activity"/>
    <property type="evidence" value="ECO:0007669"/>
    <property type="project" value="UniProtKB-UniRule"/>
</dbReference>
<dbReference type="GO" id="GO:0004776">
    <property type="term" value="F:succinate-CoA ligase (GDP-forming) activity"/>
    <property type="evidence" value="ECO:0007669"/>
    <property type="project" value="RHEA"/>
</dbReference>
<dbReference type="GO" id="GO:0006104">
    <property type="term" value="P:succinyl-CoA metabolic process"/>
    <property type="evidence" value="ECO:0007669"/>
    <property type="project" value="TreeGrafter"/>
</dbReference>
<dbReference type="GO" id="GO:0006099">
    <property type="term" value="P:tricarboxylic acid cycle"/>
    <property type="evidence" value="ECO:0007669"/>
    <property type="project" value="UniProtKB-UniRule"/>
</dbReference>
<dbReference type="FunFam" id="3.30.1490.20:FF:000002">
    <property type="entry name" value="Succinate--CoA ligase [ADP-forming] subunit beta"/>
    <property type="match status" value="1"/>
</dbReference>
<dbReference type="FunFam" id="3.30.470.20:FF:000002">
    <property type="entry name" value="Succinate--CoA ligase [ADP-forming] subunit beta"/>
    <property type="match status" value="1"/>
</dbReference>
<dbReference type="FunFam" id="3.40.50.261:FF:000001">
    <property type="entry name" value="Succinate--CoA ligase [ADP-forming] subunit beta"/>
    <property type="match status" value="1"/>
</dbReference>
<dbReference type="Gene3D" id="3.30.1490.20">
    <property type="entry name" value="ATP-grasp fold, A domain"/>
    <property type="match status" value="1"/>
</dbReference>
<dbReference type="Gene3D" id="3.30.470.20">
    <property type="entry name" value="ATP-grasp fold, B domain"/>
    <property type="match status" value="1"/>
</dbReference>
<dbReference type="Gene3D" id="3.40.50.261">
    <property type="entry name" value="Succinyl-CoA synthetase domains"/>
    <property type="match status" value="1"/>
</dbReference>
<dbReference type="HAMAP" id="MF_00558">
    <property type="entry name" value="Succ_CoA_beta"/>
    <property type="match status" value="1"/>
</dbReference>
<dbReference type="InterPro" id="IPR011761">
    <property type="entry name" value="ATP-grasp"/>
</dbReference>
<dbReference type="InterPro" id="IPR013650">
    <property type="entry name" value="ATP-grasp_succ-CoA_synth-type"/>
</dbReference>
<dbReference type="InterPro" id="IPR013815">
    <property type="entry name" value="ATP_grasp_subdomain_1"/>
</dbReference>
<dbReference type="InterPro" id="IPR017866">
    <property type="entry name" value="Succ-CoA_synthase_bsu_CS"/>
</dbReference>
<dbReference type="InterPro" id="IPR005811">
    <property type="entry name" value="SUCC_ACL_C"/>
</dbReference>
<dbReference type="InterPro" id="IPR005809">
    <property type="entry name" value="Succ_CoA_ligase-like_bsu"/>
</dbReference>
<dbReference type="InterPro" id="IPR016102">
    <property type="entry name" value="Succinyl-CoA_synth-like"/>
</dbReference>
<dbReference type="NCBIfam" id="NF001913">
    <property type="entry name" value="PRK00696.1"/>
    <property type="match status" value="1"/>
</dbReference>
<dbReference type="NCBIfam" id="TIGR01016">
    <property type="entry name" value="sucCoAbeta"/>
    <property type="match status" value="1"/>
</dbReference>
<dbReference type="PANTHER" id="PTHR11815:SF10">
    <property type="entry name" value="SUCCINATE--COA LIGASE [GDP-FORMING] SUBUNIT BETA, MITOCHONDRIAL"/>
    <property type="match status" value="1"/>
</dbReference>
<dbReference type="PANTHER" id="PTHR11815">
    <property type="entry name" value="SUCCINYL-COA SYNTHETASE BETA CHAIN"/>
    <property type="match status" value="1"/>
</dbReference>
<dbReference type="Pfam" id="PF08442">
    <property type="entry name" value="ATP-grasp_2"/>
    <property type="match status" value="1"/>
</dbReference>
<dbReference type="Pfam" id="PF00549">
    <property type="entry name" value="Ligase_CoA"/>
    <property type="match status" value="1"/>
</dbReference>
<dbReference type="PIRSF" id="PIRSF001554">
    <property type="entry name" value="SucCS_beta"/>
    <property type="match status" value="1"/>
</dbReference>
<dbReference type="SUPFAM" id="SSF56059">
    <property type="entry name" value="Glutathione synthetase ATP-binding domain-like"/>
    <property type="match status" value="1"/>
</dbReference>
<dbReference type="SUPFAM" id="SSF52210">
    <property type="entry name" value="Succinyl-CoA synthetase domains"/>
    <property type="match status" value="1"/>
</dbReference>
<dbReference type="PROSITE" id="PS50975">
    <property type="entry name" value="ATP_GRASP"/>
    <property type="match status" value="1"/>
</dbReference>
<dbReference type="PROSITE" id="PS01217">
    <property type="entry name" value="SUCCINYL_COA_LIG_3"/>
    <property type="match status" value="1"/>
</dbReference>
<reference key="1">
    <citation type="journal article" date="2011" name="Appl. Environ. Microbiol.">
        <title>Genomic potential of Marinobacter aquaeolei, a biogeochemical 'opportunitroph'.</title>
        <authorList>
            <person name="Singer E."/>
            <person name="Webb E.A."/>
            <person name="Nelson W.C."/>
            <person name="Heidelberg J.F."/>
            <person name="Ivanova N."/>
            <person name="Pati A."/>
            <person name="Edwards K.J."/>
        </authorList>
    </citation>
    <scope>NUCLEOTIDE SEQUENCE [LARGE SCALE GENOMIC DNA]</scope>
    <source>
        <strain>ATCC 700491 / DSM 11845 / VT8</strain>
    </source>
</reference>
<organism>
    <name type="scientific">Marinobacter nauticus (strain ATCC 700491 / DSM 11845 / VT8)</name>
    <name type="common">Marinobacter aquaeolei</name>
    <dbReference type="NCBI Taxonomy" id="351348"/>
    <lineage>
        <taxon>Bacteria</taxon>
        <taxon>Pseudomonadati</taxon>
        <taxon>Pseudomonadota</taxon>
        <taxon>Gammaproteobacteria</taxon>
        <taxon>Pseudomonadales</taxon>
        <taxon>Marinobacteraceae</taxon>
        <taxon>Marinobacter</taxon>
    </lineage>
</organism>
<keyword id="KW-0067">ATP-binding</keyword>
<keyword id="KW-0436">Ligase</keyword>
<keyword id="KW-0460">Magnesium</keyword>
<keyword id="KW-0479">Metal-binding</keyword>
<keyword id="KW-0547">Nucleotide-binding</keyword>
<keyword id="KW-0816">Tricarboxylic acid cycle</keyword>
<evidence type="ECO:0000255" key="1">
    <source>
        <dbReference type="HAMAP-Rule" id="MF_00558"/>
    </source>
</evidence>